<accession>A0A509ANY8</accession>
<proteinExistence type="evidence at protein level"/>
<feature type="signal peptide" evidence="3">
    <location>
        <begin position="1"/>
        <end position="19"/>
    </location>
</feature>
<feature type="chain" id="PRO_0000459594" description="Iron-sulfur cluster assembly protein SufA">
    <location>
        <begin position="20"/>
        <end position="172"/>
    </location>
</feature>
<feature type="binding site" description="sulfuration is probably achieved via an internal sulfur transfer from C-164 or C-166" evidence="1">
    <location>
        <position position="96"/>
    </location>
    <ligand>
        <name>[4Fe-4S] cluster</name>
        <dbReference type="ChEBI" id="CHEBI:49883"/>
    </ligand>
</feature>
<feature type="binding site" evidence="1">
    <location>
        <position position="164"/>
    </location>
    <ligand>
        <name>[4Fe-4S] cluster</name>
        <dbReference type="ChEBI" id="CHEBI:49883"/>
    </ligand>
</feature>
<feature type="binding site" evidence="1">
    <location>
        <position position="166"/>
    </location>
    <ligand>
        <name>[4Fe-4S] cluster</name>
        <dbReference type="ChEBI" id="CHEBI:49883"/>
    </ligand>
</feature>
<name>SUFA_PLABA</name>
<comment type="function">
    <text evidence="2">Participates in the sulfur mobilization (SUF) pathway for iron-sulfur (Fe-S) cluster biogenesis. Involved in the pre-assembly of [4Fe-4S] clusters and their transfer to target proteins.</text>
</comment>
<comment type="pathway">
    <text evidence="6">Cofactor biosynthesis; iron-sulfur cluster biosynthesis.</text>
</comment>
<comment type="subunit">
    <text evidence="2">Homodimer.</text>
</comment>
<comment type="subcellular location">
    <subcellularLocation>
        <location evidence="4">Plastid</location>
        <location evidence="4">Apicoplast</location>
    </subcellularLocation>
</comment>
<comment type="developmental stage">
    <text evidence="4">Expressed in trophozoites (at protein level).</text>
</comment>
<comment type="disruption phenotype">
    <text evidence="4">Dispensable. Disruption does not affect the establishment and progression of erythrocytic infection, parasite development in the mosquito vector and pre-erythrocytic growth.</text>
</comment>
<comment type="similarity">
    <text evidence="6">Belongs to the HesB/IscA family.</text>
</comment>
<evidence type="ECO:0000250" key="1">
    <source>
        <dbReference type="UniProtKB" id="P77667"/>
    </source>
</evidence>
<evidence type="ECO:0000250" key="2">
    <source>
        <dbReference type="UniProtKB" id="Q8I3N6"/>
    </source>
</evidence>
<evidence type="ECO:0000255" key="3"/>
<evidence type="ECO:0000269" key="4">
    <source>
    </source>
</evidence>
<evidence type="ECO:0000303" key="5">
    <source>
    </source>
</evidence>
<evidence type="ECO:0000305" key="6"/>
<evidence type="ECO:0000312" key="7">
    <source>
        <dbReference type="EMBL" id="VUC57271.1"/>
    </source>
</evidence>
<evidence type="ECO:0000312" key="8">
    <source>
        <dbReference type="Proteomes" id="UP000074855"/>
    </source>
</evidence>
<gene>
    <name evidence="5" type="primary">SufA</name>
    <name evidence="7" type="ORF">PBANKA_1237400</name>
</gene>
<dbReference type="EMBL" id="LK023127">
    <property type="protein sequence ID" value="VUC57271.1"/>
    <property type="molecule type" value="Genomic_DNA"/>
</dbReference>
<dbReference type="RefSeq" id="XP_677114.1">
    <property type="nucleotide sequence ID" value="XM_672022.1"/>
</dbReference>
<dbReference type="SMR" id="A0A509ANY8"/>
<dbReference type="FunCoup" id="A0A509ANY8">
    <property type="interactions" value="40"/>
</dbReference>
<dbReference type="STRING" id="5823.A0A509ANY8"/>
<dbReference type="VEuPathDB" id="PlasmoDB:PBANKA_1237400"/>
<dbReference type="InParanoid" id="A0A509ANY8"/>
<dbReference type="OMA" id="INNNVMD"/>
<dbReference type="UniPathway" id="UPA00266"/>
<dbReference type="Proteomes" id="UP000074855">
    <property type="component" value="Chromosome 12"/>
</dbReference>
<dbReference type="GO" id="GO:0020011">
    <property type="term" value="C:apicoplast"/>
    <property type="evidence" value="ECO:0007669"/>
    <property type="project" value="UniProtKB-SubCell"/>
</dbReference>
<dbReference type="GO" id="GO:0009570">
    <property type="term" value="C:chloroplast stroma"/>
    <property type="evidence" value="ECO:0007669"/>
    <property type="project" value="TreeGrafter"/>
</dbReference>
<dbReference type="GO" id="GO:0051539">
    <property type="term" value="F:4 iron, 4 sulfur cluster binding"/>
    <property type="evidence" value="ECO:0007669"/>
    <property type="project" value="UniProtKB-KW"/>
</dbReference>
<dbReference type="GO" id="GO:0046872">
    <property type="term" value="F:metal ion binding"/>
    <property type="evidence" value="ECO:0007669"/>
    <property type="project" value="UniProtKB-KW"/>
</dbReference>
<dbReference type="GO" id="GO:0030674">
    <property type="term" value="F:protein-macromolecule adaptor activity"/>
    <property type="evidence" value="ECO:0007669"/>
    <property type="project" value="TreeGrafter"/>
</dbReference>
<dbReference type="GO" id="GO:0016226">
    <property type="term" value="P:iron-sulfur cluster assembly"/>
    <property type="evidence" value="ECO:0007669"/>
    <property type="project" value="InterPro"/>
</dbReference>
<dbReference type="Gene3D" id="2.60.300.12">
    <property type="entry name" value="HesB-like domain"/>
    <property type="match status" value="1"/>
</dbReference>
<dbReference type="InterPro" id="IPR000361">
    <property type="entry name" value="FeS_biogenesis"/>
</dbReference>
<dbReference type="InterPro" id="IPR016092">
    <property type="entry name" value="FeS_cluster_insertion"/>
</dbReference>
<dbReference type="InterPro" id="IPR017870">
    <property type="entry name" value="FeS_cluster_insertion_CS"/>
</dbReference>
<dbReference type="InterPro" id="IPR035903">
    <property type="entry name" value="HesB-like_dom_sf"/>
</dbReference>
<dbReference type="InterPro" id="IPR031108">
    <property type="entry name" value="ISCA_plant_cyanobact"/>
</dbReference>
<dbReference type="NCBIfam" id="TIGR00049">
    <property type="entry name" value="iron-sulfur cluster assembly accessory protein"/>
    <property type="match status" value="1"/>
</dbReference>
<dbReference type="PANTHER" id="PTHR47265">
    <property type="entry name" value="IRON-SULFUR ASSEMBLY PROTEIN ISCA, CHLOROPLASTIC"/>
    <property type="match status" value="1"/>
</dbReference>
<dbReference type="PANTHER" id="PTHR47265:SF1">
    <property type="entry name" value="IRON-SULFUR ASSEMBLY PROTEIN ISCA, CHLOROPLASTIC"/>
    <property type="match status" value="1"/>
</dbReference>
<dbReference type="Pfam" id="PF01521">
    <property type="entry name" value="Fe-S_biosyn"/>
    <property type="match status" value="1"/>
</dbReference>
<dbReference type="SUPFAM" id="SSF89360">
    <property type="entry name" value="HesB-like domain"/>
    <property type="match status" value="1"/>
</dbReference>
<dbReference type="PROSITE" id="PS01152">
    <property type="entry name" value="HESB"/>
    <property type="match status" value="1"/>
</dbReference>
<keyword id="KW-0004">4Fe-4S</keyword>
<keyword id="KW-0933">Apicoplast</keyword>
<keyword id="KW-0408">Iron</keyword>
<keyword id="KW-0411">Iron-sulfur</keyword>
<keyword id="KW-0479">Metal-binding</keyword>
<keyword id="KW-0934">Plastid</keyword>
<keyword id="KW-1185">Reference proteome</keyword>
<keyword id="KW-0732">Signal</keyword>
<sequence>MFINIFLFLFAATINISSSLRYAGFSSYIYTPNKYINNNVMDRKFIRRLNAVDESIKNNEHIIKLTDNAKNKIKQLVTEIEDKNLILKLCVENGGCKGLKYKLNPIKKEDIETDDYIQQFDELKFILSIDSTSVIYIYNNILDYSNDLINGGFKFINPNATKKCGCGKSFNV</sequence>
<organism evidence="8">
    <name type="scientific">Plasmodium berghei (strain Anka)</name>
    <dbReference type="NCBI Taxonomy" id="5823"/>
    <lineage>
        <taxon>Eukaryota</taxon>
        <taxon>Sar</taxon>
        <taxon>Alveolata</taxon>
        <taxon>Apicomplexa</taxon>
        <taxon>Aconoidasida</taxon>
        <taxon>Haemosporida</taxon>
        <taxon>Plasmodiidae</taxon>
        <taxon>Plasmodium</taxon>
        <taxon>Plasmodium (Vinckeia)</taxon>
    </lineage>
</organism>
<protein>
    <recommendedName>
        <fullName evidence="6">Iron-sulfur cluster assembly protein SufA</fullName>
    </recommendedName>
</protein>
<reference evidence="8" key="1">
    <citation type="journal article" date="2014" name="BMC Biol.">
        <title>A comprehensive evaluation of rodent malaria parasite genomes and gene expression.</title>
        <authorList>
            <person name="Otto T.D."/>
            <person name="Bohme U."/>
            <person name="Jackson A.P."/>
            <person name="Hunt M."/>
            <person name="Franke-Fayard B."/>
            <person name="Hoeijmakers W.A."/>
            <person name="Religa A.A."/>
            <person name="Robertson L."/>
            <person name="Sanders M."/>
            <person name="Ogun S.A."/>
            <person name="Cunningham D."/>
            <person name="Erhart A."/>
            <person name="Billker O."/>
            <person name="Khan S.M."/>
            <person name="Stunnenberg H.G."/>
            <person name="Langhorne J."/>
            <person name="Holder A.A."/>
            <person name="Waters A.P."/>
            <person name="Newbold C.I."/>
            <person name="Pain A."/>
            <person name="Berriman M."/>
            <person name="Janse C.J."/>
        </authorList>
    </citation>
    <scope>NUCLEOTIDE SEQUENCE [LARGE SCALE GENOMIC DNA]</scope>
    <source>
        <strain evidence="8">ANKA</strain>
    </source>
</reference>
<reference evidence="6" key="2">
    <citation type="journal article" date="2014" name="PLoS ONE">
        <title>Identification of vital and dispensable sulfur utilization factors in the Plasmodium apicoplast.</title>
        <authorList>
            <person name="Haussig J.M."/>
            <person name="Matuschewski K."/>
            <person name="Kooij T.W."/>
        </authorList>
    </citation>
    <scope>SUBCELLULAR LOCATION</scope>
    <scope>DEVELOPMENTAL STAGE</scope>
    <scope>DISRUPTION PHENOTYPE</scope>
</reference>